<organism>
    <name type="scientific">Arabidopsis thaliana</name>
    <name type="common">Mouse-ear cress</name>
    <dbReference type="NCBI Taxonomy" id="3702"/>
    <lineage>
        <taxon>Eukaryota</taxon>
        <taxon>Viridiplantae</taxon>
        <taxon>Streptophyta</taxon>
        <taxon>Embryophyta</taxon>
        <taxon>Tracheophyta</taxon>
        <taxon>Spermatophyta</taxon>
        <taxon>Magnoliopsida</taxon>
        <taxon>eudicotyledons</taxon>
        <taxon>Gunneridae</taxon>
        <taxon>Pentapetalae</taxon>
        <taxon>rosids</taxon>
        <taxon>malvids</taxon>
        <taxon>Brassicales</taxon>
        <taxon>Brassicaceae</taxon>
        <taxon>Camelineae</taxon>
        <taxon>Arabidopsis</taxon>
    </lineage>
</organism>
<reference key="1">
    <citation type="journal article" date="2000" name="Nature">
        <title>Sequence and analysis of chromosome 3 of the plant Arabidopsis thaliana.</title>
        <authorList>
            <person name="Salanoubat M."/>
            <person name="Lemcke K."/>
            <person name="Rieger M."/>
            <person name="Ansorge W."/>
            <person name="Unseld M."/>
            <person name="Fartmann B."/>
            <person name="Valle G."/>
            <person name="Bloecker H."/>
            <person name="Perez-Alonso M."/>
            <person name="Obermaier B."/>
            <person name="Delseny M."/>
            <person name="Boutry M."/>
            <person name="Grivell L.A."/>
            <person name="Mache R."/>
            <person name="Puigdomenech P."/>
            <person name="De Simone V."/>
            <person name="Choisne N."/>
            <person name="Artiguenave F."/>
            <person name="Robert C."/>
            <person name="Brottier P."/>
            <person name="Wincker P."/>
            <person name="Cattolico L."/>
            <person name="Weissenbach J."/>
            <person name="Saurin W."/>
            <person name="Quetier F."/>
            <person name="Schaefer M."/>
            <person name="Mueller-Auer S."/>
            <person name="Gabel C."/>
            <person name="Fuchs M."/>
            <person name="Benes V."/>
            <person name="Wurmbach E."/>
            <person name="Drzonek H."/>
            <person name="Erfle H."/>
            <person name="Jordan N."/>
            <person name="Bangert S."/>
            <person name="Wiedelmann R."/>
            <person name="Kranz H."/>
            <person name="Voss H."/>
            <person name="Holland R."/>
            <person name="Brandt P."/>
            <person name="Nyakatura G."/>
            <person name="Vezzi A."/>
            <person name="D'Angelo M."/>
            <person name="Pallavicini A."/>
            <person name="Toppo S."/>
            <person name="Simionati B."/>
            <person name="Conrad A."/>
            <person name="Hornischer K."/>
            <person name="Kauer G."/>
            <person name="Loehnert T.-H."/>
            <person name="Nordsiek G."/>
            <person name="Reichelt J."/>
            <person name="Scharfe M."/>
            <person name="Schoen O."/>
            <person name="Bargues M."/>
            <person name="Terol J."/>
            <person name="Climent J."/>
            <person name="Navarro P."/>
            <person name="Collado C."/>
            <person name="Perez-Perez A."/>
            <person name="Ottenwaelder B."/>
            <person name="Duchemin D."/>
            <person name="Cooke R."/>
            <person name="Laudie M."/>
            <person name="Berger-Llauro C."/>
            <person name="Purnelle B."/>
            <person name="Masuy D."/>
            <person name="de Haan M."/>
            <person name="Maarse A.C."/>
            <person name="Alcaraz J.-P."/>
            <person name="Cottet A."/>
            <person name="Casacuberta E."/>
            <person name="Monfort A."/>
            <person name="Argiriou A."/>
            <person name="Flores M."/>
            <person name="Liguori R."/>
            <person name="Vitale D."/>
            <person name="Mannhaupt G."/>
            <person name="Haase D."/>
            <person name="Schoof H."/>
            <person name="Rudd S."/>
            <person name="Zaccaria P."/>
            <person name="Mewes H.-W."/>
            <person name="Mayer K.F.X."/>
            <person name="Kaul S."/>
            <person name="Town C.D."/>
            <person name="Koo H.L."/>
            <person name="Tallon L.J."/>
            <person name="Jenkins J."/>
            <person name="Rooney T."/>
            <person name="Rizzo M."/>
            <person name="Walts A."/>
            <person name="Utterback T."/>
            <person name="Fujii C.Y."/>
            <person name="Shea T.P."/>
            <person name="Creasy T.H."/>
            <person name="Haas B."/>
            <person name="Maiti R."/>
            <person name="Wu D."/>
            <person name="Peterson J."/>
            <person name="Van Aken S."/>
            <person name="Pai G."/>
            <person name="Militscher J."/>
            <person name="Sellers P."/>
            <person name="Gill J.E."/>
            <person name="Feldblyum T.V."/>
            <person name="Preuss D."/>
            <person name="Lin X."/>
            <person name="Nierman W.C."/>
            <person name="Salzberg S.L."/>
            <person name="White O."/>
            <person name="Venter J.C."/>
            <person name="Fraser C.M."/>
            <person name="Kaneko T."/>
            <person name="Nakamura Y."/>
            <person name="Sato S."/>
            <person name="Kato T."/>
            <person name="Asamizu E."/>
            <person name="Sasamoto S."/>
            <person name="Kimura T."/>
            <person name="Idesawa K."/>
            <person name="Kawashima K."/>
            <person name="Kishida Y."/>
            <person name="Kiyokawa C."/>
            <person name="Kohara M."/>
            <person name="Matsumoto M."/>
            <person name="Matsuno A."/>
            <person name="Muraki A."/>
            <person name="Nakayama S."/>
            <person name="Nakazaki N."/>
            <person name="Shinpo S."/>
            <person name="Takeuchi C."/>
            <person name="Wada T."/>
            <person name="Watanabe A."/>
            <person name="Yamada M."/>
            <person name="Yasuda M."/>
            <person name="Tabata S."/>
        </authorList>
    </citation>
    <scope>NUCLEOTIDE SEQUENCE [LARGE SCALE GENOMIC DNA]</scope>
    <source>
        <strain>cv. Columbia</strain>
    </source>
</reference>
<reference key="2">
    <citation type="journal article" date="2017" name="Plant J.">
        <title>Araport11: a complete reannotation of the Arabidopsis thaliana reference genome.</title>
        <authorList>
            <person name="Cheng C.Y."/>
            <person name="Krishnakumar V."/>
            <person name="Chan A.P."/>
            <person name="Thibaud-Nissen F."/>
            <person name="Schobel S."/>
            <person name="Town C.D."/>
        </authorList>
    </citation>
    <scope>GENOME REANNOTATION</scope>
    <source>
        <strain>cv. Columbia</strain>
    </source>
</reference>
<reference key="3">
    <citation type="journal article" date="2002" name="Science">
        <title>Functional annotation of a full-length Arabidopsis cDNA collection.</title>
        <authorList>
            <person name="Seki M."/>
            <person name="Narusaka M."/>
            <person name="Kamiya A."/>
            <person name="Ishida J."/>
            <person name="Satou M."/>
            <person name="Sakurai T."/>
            <person name="Nakajima M."/>
            <person name="Enju A."/>
            <person name="Akiyama K."/>
            <person name="Oono Y."/>
            <person name="Muramatsu M."/>
            <person name="Hayashizaki Y."/>
            <person name="Kawai J."/>
            <person name="Carninci P."/>
            <person name="Itoh M."/>
            <person name="Ishii Y."/>
            <person name="Arakawa T."/>
            <person name="Shibata K."/>
            <person name="Shinagawa A."/>
            <person name="Shinozaki K."/>
        </authorList>
    </citation>
    <scope>NUCLEOTIDE SEQUENCE [LARGE SCALE MRNA]</scope>
    <source>
        <strain>cv. Columbia</strain>
    </source>
</reference>
<reference key="4">
    <citation type="submission" date="2006-06" db="EMBL/GenBank/DDBJ databases">
        <title>Arabidopsis ORF clones.</title>
        <authorList>
            <person name="Kim C.J."/>
            <person name="Chen H."/>
            <person name="Quinitio C."/>
            <person name="Shinn P."/>
            <person name="Ecker J.R."/>
        </authorList>
    </citation>
    <scope>NUCLEOTIDE SEQUENCE [LARGE SCALE MRNA]</scope>
    <source>
        <strain>cv. Columbia</strain>
    </source>
</reference>
<reference key="5">
    <citation type="journal article" date="2004" name="EMBO J.">
        <title>The response regulator 2 mediates ethylene signalling and hormone signal integration in Arabidopsis.</title>
        <authorList>
            <person name="Hass C."/>
            <person name="Lohrmann J."/>
            <person name="Albrecht V."/>
            <person name="Sweere U."/>
            <person name="Hummel F."/>
            <person name="Yoo S.D."/>
            <person name="Hwang I."/>
            <person name="Zhu T."/>
            <person name="Schaefer E."/>
            <person name="Kudla J."/>
            <person name="Harter K."/>
        </authorList>
    </citation>
    <scope>REGULATION BY ARR2</scope>
</reference>
<reference key="6">
    <citation type="journal article" date="2018" name="Biochemistry">
        <title>Solution NMR structure and backbone dynamics of partially disordered Arabidopsis thaliana phloem protein 16-1, a putative mRNA transporter.</title>
        <authorList>
            <person name="Sashi P."/>
            <person name="Singarapu K.K."/>
            <person name="Bhuyan A.K."/>
        </authorList>
    </citation>
    <scope>STRUCTURE BY NMR</scope>
    <scope>FUNCTION</scope>
    <scope>NOMENCLATURE</scope>
</reference>
<name>PP16A_ARATH</name>
<accession>Q9M2T2</accession>
<accession>A0A178VK75</accession>
<dbReference type="EMBL" id="AL132975">
    <property type="protein sequence ID" value="CAB75905.1"/>
    <property type="molecule type" value="Genomic_DNA"/>
</dbReference>
<dbReference type="EMBL" id="CP002686">
    <property type="protein sequence ID" value="AEE79388.1"/>
    <property type="molecule type" value="Genomic_DNA"/>
</dbReference>
<dbReference type="EMBL" id="AK117139">
    <property type="protein sequence ID" value="BAC41817.1"/>
    <property type="molecule type" value="mRNA"/>
</dbReference>
<dbReference type="EMBL" id="BT025730">
    <property type="protein sequence ID" value="ABF83620.1"/>
    <property type="molecule type" value="mRNA"/>
</dbReference>
<dbReference type="PIR" id="T47686">
    <property type="entry name" value="T47686"/>
</dbReference>
<dbReference type="RefSeq" id="NP_191107.1">
    <property type="nucleotide sequence ID" value="NM_115405.4"/>
</dbReference>
<dbReference type="PDB" id="5YQ3">
    <property type="method" value="NMR"/>
    <property type="chains" value="A=1-156"/>
</dbReference>
<dbReference type="PDBsum" id="5YQ3"/>
<dbReference type="SMR" id="Q9M2T2"/>
<dbReference type="FunCoup" id="Q9M2T2">
    <property type="interactions" value="218"/>
</dbReference>
<dbReference type="STRING" id="3702.Q9M2T2"/>
<dbReference type="PaxDb" id="3702-AT3G55470.1"/>
<dbReference type="ProteomicsDB" id="189931"/>
<dbReference type="EnsemblPlants" id="AT3G55470.1">
    <property type="protein sequence ID" value="AT3G55470.1"/>
    <property type="gene ID" value="AT3G55470"/>
</dbReference>
<dbReference type="GeneID" id="824713"/>
<dbReference type="Gramene" id="AT3G55470.1">
    <property type="protein sequence ID" value="AT3G55470.1"/>
    <property type="gene ID" value="AT3G55470"/>
</dbReference>
<dbReference type="KEGG" id="ath:AT3G55470"/>
<dbReference type="Araport" id="AT3G55470"/>
<dbReference type="TAIR" id="AT3G55470"/>
<dbReference type="eggNOG" id="KOG1030">
    <property type="taxonomic scope" value="Eukaryota"/>
</dbReference>
<dbReference type="InParanoid" id="Q9M2T2"/>
<dbReference type="OrthoDB" id="419768at2759"/>
<dbReference type="PhylomeDB" id="Q9M2T2"/>
<dbReference type="PRO" id="PR:Q9M2T2"/>
<dbReference type="Proteomes" id="UP000006548">
    <property type="component" value="Chromosome 3"/>
</dbReference>
<dbReference type="ExpressionAtlas" id="Q9M2T2">
    <property type="expression patterns" value="baseline and differential"/>
</dbReference>
<dbReference type="GO" id="GO:0046872">
    <property type="term" value="F:metal ion binding"/>
    <property type="evidence" value="ECO:0007669"/>
    <property type="project" value="UniProtKB-KW"/>
</dbReference>
<dbReference type="GO" id="GO:0003723">
    <property type="term" value="F:RNA binding"/>
    <property type="evidence" value="ECO:0000314"/>
    <property type="project" value="UniProtKB"/>
</dbReference>
<dbReference type="GO" id="GO:0006952">
    <property type="term" value="P:defense response"/>
    <property type="evidence" value="ECO:0007669"/>
    <property type="project" value="UniProtKB-KW"/>
</dbReference>
<dbReference type="CDD" id="cd04049">
    <property type="entry name" value="C2_putative_Elicitor-responsive_gene"/>
    <property type="match status" value="1"/>
</dbReference>
<dbReference type="FunFam" id="2.60.40.150:FF:000321">
    <property type="entry name" value="16 kDa phloem protein 1"/>
    <property type="match status" value="1"/>
</dbReference>
<dbReference type="Gene3D" id="2.60.40.150">
    <property type="entry name" value="C2 domain"/>
    <property type="match status" value="1"/>
</dbReference>
<dbReference type="InterPro" id="IPR000008">
    <property type="entry name" value="C2_dom"/>
</dbReference>
<dbReference type="InterPro" id="IPR035892">
    <property type="entry name" value="C2_domain_sf"/>
</dbReference>
<dbReference type="PANTHER" id="PTHR46502:SF15">
    <property type="entry name" value="16 KDA PHLOEM PROTEIN 1"/>
    <property type="match status" value="1"/>
</dbReference>
<dbReference type="PANTHER" id="PTHR46502">
    <property type="entry name" value="C2 DOMAIN-CONTAINING"/>
    <property type="match status" value="1"/>
</dbReference>
<dbReference type="Pfam" id="PF00168">
    <property type="entry name" value="C2"/>
    <property type="match status" value="1"/>
</dbReference>
<dbReference type="SMART" id="SM00239">
    <property type="entry name" value="C2"/>
    <property type="match status" value="1"/>
</dbReference>
<dbReference type="SUPFAM" id="SSF49562">
    <property type="entry name" value="C2 domain (Calcium/lipid-binding domain, CaLB)"/>
    <property type="match status" value="1"/>
</dbReference>
<dbReference type="PROSITE" id="PS50004">
    <property type="entry name" value="C2"/>
    <property type="match status" value="1"/>
</dbReference>
<proteinExistence type="evidence at protein level"/>
<keyword id="KW-0002">3D-structure</keyword>
<keyword id="KW-0106">Calcium</keyword>
<keyword id="KW-0479">Metal-binding</keyword>
<keyword id="KW-0611">Plant defense</keyword>
<keyword id="KW-1185">Reference proteome</keyword>
<keyword id="KW-0694">RNA-binding</keyword>
<keyword id="KW-0813">Transport</keyword>
<sequence>MAVGILEVSLISGKGLKRSDFLGKIDPYVEIQYKGQTRKSSVAKEDGGRNPTWNDKLKWRAEFPGSGADYKLIVKVMDHDTFSSDDFIGEATVHVKELLEMGVEKGTAELRPTKYNIVDSDLSFVGELLIGVSYSLLQDRGMDGEQFGGWKHSQVD</sequence>
<protein>
    <recommendedName>
        <fullName evidence="7">16 kDa phloem protein 1</fullName>
        <shortName evidence="7">AtPP16-1</shortName>
        <shortName evidence="7">Phloem protein 16-1</shortName>
    </recommendedName>
    <alternativeName>
        <fullName evidence="6">Elicitor-responsive protein FIERG2</fullName>
    </alternativeName>
</protein>
<evidence type="ECO:0000250" key="1">
    <source>
        <dbReference type="UniProtKB" id="Q0JHU5"/>
    </source>
</evidence>
<evidence type="ECO:0000250" key="2">
    <source>
        <dbReference type="UniProtKB" id="Q9ZT47"/>
    </source>
</evidence>
<evidence type="ECO:0000255" key="3">
    <source>
        <dbReference type="PROSITE-ProRule" id="PRU00041"/>
    </source>
</evidence>
<evidence type="ECO:0000269" key="4">
    <source>
    </source>
</evidence>
<evidence type="ECO:0000269" key="5">
    <source>
    </source>
</evidence>
<evidence type="ECO:0000303" key="6">
    <source>
    </source>
</evidence>
<evidence type="ECO:0000303" key="7">
    <source>
    </source>
</evidence>
<evidence type="ECO:0000312" key="8">
    <source>
        <dbReference type="Araport" id="AT3G55470"/>
    </source>
</evidence>
<evidence type="ECO:0000312" key="9">
    <source>
        <dbReference type="EMBL" id="CAB75905.1"/>
    </source>
</evidence>
<evidence type="ECO:0007829" key="10">
    <source>
        <dbReference type="PDB" id="5YQ3"/>
    </source>
</evidence>
<comment type="function">
    <text evidence="1 2 5">Binds to both sense and antisense RNA (PubMed:29320165). Can also bind sheared DNA and dodecamer DNA with a low affinity (PubMed:29320165). Interacts with mesophyll plasmodesmata to mediate its own cell-to-cell transport and potentiate RNA trafficking (By similarity). May play a role in plant defense signaling (By similarity).</text>
</comment>
<comment type="cofactor">
    <cofactor evidence="3">
        <name>Ca(2+)</name>
        <dbReference type="ChEBI" id="CHEBI:29108"/>
    </cofactor>
    <text evidence="3">Binds 3 Ca(2+) ions per C2 domain.</text>
</comment>
<comment type="induction">
    <text evidence="4">Regulated by ARR2.</text>
</comment>
<gene>
    <name evidence="7" type="primary">PP16-1</name>
    <name evidence="6" type="synonym">FIERG2</name>
    <name evidence="8" type="ordered locus">At3g55470</name>
    <name evidence="9" type="ORF">T22E16.130</name>
</gene>
<feature type="chain" id="PRO_0000447256" description="16 kDa phloem protein 1">
    <location>
        <begin position="1"/>
        <end position="156"/>
    </location>
</feature>
<feature type="domain" description="C2" evidence="3">
    <location>
        <begin position="1"/>
        <end position="108"/>
    </location>
</feature>
<feature type="binding site" evidence="3">
    <location>
        <position position="20"/>
    </location>
    <ligand>
        <name>Ca(2+)</name>
        <dbReference type="ChEBI" id="CHEBI:29108"/>
        <label>1</label>
    </ligand>
</feature>
<feature type="binding site" evidence="3">
    <location>
        <position position="20"/>
    </location>
    <ligand>
        <name>Ca(2+)</name>
        <dbReference type="ChEBI" id="CHEBI:29108"/>
        <label>2</label>
    </ligand>
</feature>
<feature type="binding site" evidence="3">
    <location>
        <position position="26"/>
    </location>
    <ligand>
        <name>Ca(2+)</name>
        <dbReference type="ChEBI" id="CHEBI:29108"/>
        <label>1</label>
    </ligand>
</feature>
<feature type="binding site" evidence="3">
    <location>
        <position position="78"/>
    </location>
    <ligand>
        <name>Ca(2+)</name>
        <dbReference type="ChEBI" id="CHEBI:29108"/>
        <label>1</label>
    </ligand>
</feature>
<feature type="binding site" evidence="3">
    <location>
        <position position="78"/>
    </location>
    <ligand>
        <name>Ca(2+)</name>
        <dbReference type="ChEBI" id="CHEBI:29108"/>
        <label>2</label>
    </ligand>
</feature>
<feature type="binding site" evidence="3">
    <location>
        <position position="80"/>
    </location>
    <ligand>
        <name>Ca(2+)</name>
        <dbReference type="ChEBI" id="CHEBI:29108"/>
        <label>1</label>
    </ligand>
</feature>
<feature type="binding site" evidence="3">
    <location>
        <position position="80"/>
    </location>
    <ligand>
        <name>Ca(2+)</name>
        <dbReference type="ChEBI" id="CHEBI:29108"/>
        <label>2</label>
    </ligand>
</feature>
<feature type="binding site" evidence="3">
    <location>
        <position position="80"/>
    </location>
    <ligand>
        <name>Ca(2+)</name>
        <dbReference type="ChEBI" id="CHEBI:29108"/>
        <label>3</label>
    </ligand>
</feature>
<feature type="binding site" evidence="3">
    <location>
        <position position="83"/>
    </location>
    <ligand>
        <name>Ca(2+)</name>
        <dbReference type="ChEBI" id="CHEBI:29108"/>
        <label>3</label>
    </ligand>
</feature>
<feature type="binding site" evidence="3">
    <location>
        <position position="86"/>
    </location>
    <ligand>
        <name>Ca(2+)</name>
        <dbReference type="ChEBI" id="CHEBI:29108"/>
        <label>2</label>
    </ligand>
</feature>
<feature type="binding site" evidence="3">
    <location>
        <position position="86"/>
    </location>
    <ligand>
        <name>Ca(2+)</name>
        <dbReference type="ChEBI" id="CHEBI:29108"/>
        <label>3</label>
    </ligand>
</feature>
<feature type="strand" evidence="10">
    <location>
        <begin position="4"/>
        <end position="9"/>
    </location>
</feature>
<feature type="strand" evidence="10">
    <location>
        <begin position="23"/>
        <end position="27"/>
    </location>
</feature>
<feature type="strand" evidence="10">
    <location>
        <begin position="33"/>
        <end position="35"/>
    </location>
</feature>
<feature type="strand" evidence="10">
    <location>
        <begin position="56"/>
        <end position="61"/>
    </location>
</feature>
<feature type="strand" evidence="10">
    <location>
        <begin position="92"/>
        <end position="94"/>
    </location>
</feature>
<feature type="helix" evidence="10">
    <location>
        <begin position="96"/>
        <end position="100"/>
    </location>
</feature>
<feature type="helix" evidence="10">
    <location>
        <begin position="102"/>
        <end position="105"/>
    </location>
</feature>
<feature type="strand" evidence="10">
    <location>
        <begin position="106"/>
        <end position="108"/>
    </location>
</feature>
<feature type="strand" evidence="10">
    <location>
        <begin position="118"/>
        <end position="123"/>
    </location>
</feature>
<feature type="strand" evidence="10">
    <location>
        <begin position="134"/>
        <end position="136"/>
    </location>
</feature>